<name>SLK3_ARATH</name>
<keyword id="KW-0217">Developmental protein</keyword>
<keyword id="KW-0221">Differentiation</keyword>
<keyword id="KW-0287">Flowering</keyword>
<keyword id="KW-0539">Nucleus</keyword>
<keyword id="KW-1185">Reference proteome</keyword>
<keyword id="KW-0804">Transcription</keyword>
<keyword id="KW-0805">Transcription regulation</keyword>
<dbReference type="EMBL" id="AL022197">
    <property type="protein sequence ID" value="CAA18172.1"/>
    <property type="molecule type" value="Genomic_DNA"/>
</dbReference>
<dbReference type="EMBL" id="CP002687">
    <property type="protein sequence ID" value="AEE85072.1"/>
    <property type="molecule type" value="Genomic_DNA"/>
</dbReference>
<dbReference type="RefSeq" id="NP_680741.5">
    <property type="nucleotide sequence ID" value="NM_148375.6"/>
</dbReference>
<dbReference type="FunCoup" id="F4JT98">
    <property type="interactions" value="51"/>
</dbReference>
<dbReference type="STRING" id="3702.F4JT98"/>
<dbReference type="PaxDb" id="3702-AT4G25515.1"/>
<dbReference type="ProteomicsDB" id="234572"/>
<dbReference type="EnsemblPlants" id="AT4G25515.1">
    <property type="protein sequence ID" value="AT4G25515.1"/>
    <property type="gene ID" value="AT4G25515"/>
</dbReference>
<dbReference type="GeneID" id="828656"/>
<dbReference type="Gramene" id="AT4G25515.1">
    <property type="protein sequence ID" value="AT4G25515.1"/>
    <property type="gene ID" value="AT4G25515"/>
</dbReference>
<dbReference type="KEGG" id="ath:AT4G25515"/>
<dbReference type="Araport" id="AT4G25515"/>
<dbReference type="TAIR" id="AT4G25515">
    <property type="gene designation" value="SLK3"/>
</dbReference>
<dbReference type="eggNOG" id="ENOG502SZ3H">
    <property type="taxonomic scope" value="Eukaryota"/>
</dbReference>
<dbReference type="HOGENOM" id="CLU_007007_1_0_1"/>
<dbReference type="InParanoid" id="F4JT98"/>
<dbReference type="OMA" id="NTQEQQM"/>
<dbReference type="PhylomeDB" id="F4JT98"/>
<dbReference type="PRO" id="PR:F4JT98"/>
<dbReference type="Proteomes" id="UP000006548">
    <property type="component" value="Chromosome 4"/>
</dbReference>
<dbReference type="ExpressionAtlas" id="F4JT98">
    <property type="expression patterns" value="baseline and differential"/>
</dbReference>
<dbReference type="GO" id="GO:0005634">
    <property type="term" value="C:nucleus"/>
    <property type="evidence" value="ECO:0007669"/>
    <property type="project" value="UniProtKB-SubCell"/>
</dbReference>
<dbReference type="GO" id="GO:0030154">
    <property type="term" value="P:cell differentiation"/>
    <property type="evidence" value="ECO:0007669"/>
    <property type="project" value="UniProtKB-KW"/>
</dbReference>
<dbReference type="GO" id="GO:0009908">
    <property type="term" value="P:flower development"/>
    <property type="evidence" value="ECO:0007669"/>
    <property type="project" value="UniProtKB-KW"/>
</dbReference>
<dbReference type="InterPro" id="IPR029005">
    <property type="entry name" value="LIM-bd/SEUSS"/>
</dbReference>
<dbReference type="PANTHER" id="PTHR10378">
    <property type="entry name" value="LIM DOMAIN-BINDING PROTEIN"/>
    <property type="match status" value="1"/>
</dbReference>
<dbReference type="Pfam" id="PF01803">
    <property type="entry name" value="LIM_bind"/>
    <property type="match status" value="1"/>
</dbReference>
<feature type="chain" id="PRO_0000430165" description="Probable transcriptional regulator SLK3">
    <location>
        <begin position="1"/>
        <end position="685"/>
    </location>
</feature>
<feature type="region of interest" description="Disordered" evidence="3">
    <location>
        <begin position="25"/>
        <end position="66"/>
    </location>
</feature>
<feature type="region of interest" description="Disordered" evidence="3">
    <location>
        <begin position="108"/>
        <end position="129"/>
    </location>
</feature>
<feature type="region of interest" description="Dimerization" evidence="1">
    <location>
        <begin position="176"/>
        <end position="423"/>
    </location>
</feature>
<feature type="region of interest" description="Disordered" evidence="3">
    <location>
        <begin position="447"/>
        <end position="491"/>
    </location>
</feature>
<feature type="region of interest" description="Disordered" evidence="3">
    <location>
        <begin position="512"/>
        <end position="591"/>
    </location>
</feature>
<feature type="region of interest" description="Disordered" evidence="3">
    <location>
        <begin position="611"/>
        <end position="658"/>
    </location>
</feature>
<feature type="short sequence motif" description="Nuclear localization signal" evidence="2">
    <location>
        <begin position="185"/>
        <end position="199"/>
    </location>
</feature>
<feature type="compositionally biased region" description="Low complexity" evidence="3">
    <location>
        <begin position="39"/>
        <end position="56"/>
    </location>
</feature>
<feature type="compositionally biased region" description="Polar residues" evidence="3">
    <location>
        <begin position="447"/>
        <end position="459"/>
    </location>
</feature>
<feature type="compositionally biased region" description="Low complexity" evidence="3">
    <location>
        <begin position="460"/>
        <end position="471"/>
    </location>
</feature>
<feature type="compositionally biased region" description="Polar residues" evidence="3">
    <location>
        <begin position="512"/>
        <end position="524"/>
    </location>
</feature>
<feature type="compositionally biased region" description="Low complexity" evidence="3">
    <location>
        <begin position="525"/>
        <end position="543"/>
    </location>
</feature>
<feature type="compositionally biased region" description="Polar residues" evidence="3">
    <location>
        <begin position="544"/>
        <end position="588"/>
    </location>
</feature>
<feature type="compositionally biased region" description="Polar residues" evidence="3">
    <location>
        <begin position="611"/>
        <end position="636"/>
    </location>
</feature>
<feature type="compositionally biased region" description="Polar residues" evidence="3">
    <location>
        <begin position="645"/>
        <end position="658"/>
    </location>
</feature>
<gene>
    <name type="primary">SLK3</name>
    <name type="ordered locus">At4g25515</name>
    <name type="ORF">M7J2</name>
</gene>
<evidence type="ECO:0000250" key="1"/>
<evidence type="ECO:0000255" key="2"/>
<evidence type="ECO:0000256" key="3">
    <source>
        <dbReference type="SAM" id="MobiDB-lite"/>
    </source>
</evidence>
<evidence type="ECO:0000269" key="4">
    <source>
    </source>
</evidence>
<evidence type="ECO:0000305" key="5"/>
<organism>
    <name type="scientific">Arabidopsis thaliana</name>
    <name type="common">Mouse-ear cress</name>
    <dbReference type="NCBI Taxonomy" id="3702"/>
    <lineage>
        <taxon>Eukaryota</taxon>
        <taxon>Viridiplantae</taxon>
        <taxon>Streptophyta</taxon>
        <taxon>Embryophyta</taxon>
        <taxon>Tracheophyta</taxon>
        <taxon>Spermatophyta</taxon>
        <taxon>Magnoliopsida</taxon>
        <taxon>eudicotyledons</taxon>
        <taxon>Gunneridae</taxon>
        <taxon>Pentapetalae</taxon>
        <taxon>rosids</taxon>
        <taxon>malvids</taxon>
        <taxon>Brassicales</taxon>
        <taxon>Brassicaceae</taxon>
        <taxon>Camelineae</taxon>
        <taxon>Arabidopsis</taxon>
    </lineage>
</organism>
<comment type="function">
    <text evidence="1 4">Probable transcription regulator that functions in the development of the carpel margin meristem similarly to SEUSS (SEU). In association with SEU, supports organ development from meristematic regions by facilitating auxin response and thus organ initiation, and by sustaining meristematic potential through the maintenance of PHABULOSA expression (By similarity).</text>
</comment>
<comment type="subcellular location">
    <subcellularLocation>
        <location evidence="1">Nucleus</location>
    </subcellularLocation>
</comment>
<comment type="disruption phenotype">
    <text evidence="4">No visible phenotype under normal growth conditions.</text>
</comment>
<comment type="similarity">
    <text evidence="5">Belongs to the adn1/SEU family.</text>
</comment>
<accession>F4JT98</accession>
<reference key="1">
    <citation type="journal article" date="1999" name="Nature">
        <title>Sequence and analysis of chromosome 4 of the plant Arabidopsis thaliana.</title>
        <authorList>
            <person name="Mayer K.F.X."/>
            <person name="Schueller C."/>
            <person name="Wambutt R."/>
            <person name="Murphy G."/>
            <person name="Volckaert G."/>
            <person name="Pohl T."/>
            <person name="Duesterhoeft A."/>
            <person name="Stiekema W."/>
            <person name="Entian K.-D."/>
            <person name="Terryn N."/>
            <person name="Harris B."/>
            <person name="Ansorge W."/>
            <person name="Brandt P."/>
            <person name="Grivell L.A."/>
            <person name="Rieger M."/>
            <person name="Weichselgartner M."/>
            <person name="de Simone V."/>
            <person name="Obermaier B."/>
            <person name="Mache R."/>
            <person name="Mueller M."/>
            <person name="Kreis M."/>
            <person name="Delseny M."/>
            <person name="Puigdomenech P."/>
            <person name="Watson M."/>
            <person name="Schmidtheini T."/>
            <person name="Reichert B."/>
            <person name="Portetelle D."/>
            <person name="Perez-Alonso M."/>
            <person name="Boutry M."/>
            <person name="Bancroft I."/>
            <person name="Vos P."/>
            <person name="Hoheisel J."/>
            <person name="Zimmermann W."/>
            <person name="Wedler H."/>
            <person name="Ridley P."/>
            <person name="Langham S.-A."/>
            <person name="McCullagh B."/>
            <person name="Bilham L."/>
            <person name="Robben J."/>
            <person name="van der Schueren J."/>
            <person name="Grymonprez B."/>
            <person name="Chuang Y.-J."/>
            <person name="Vandenbussche F."/>
            <person name="Braeken M."/>
            <person name="Weltjens I."/>
            <person name="Voet M."/>
            <person name="Bastiaens I."/>
            <person name="Aert R."/>
            <person name="Defoor E."/>
            <person name="Weitzenegger T."/>
            <person name="Bothe G."/>
            <person name="Ramsperger U."/>
            <person name="Hilbert H."/>
            <person name="Braun M."/>
            <person name="Holzer E."/>
            <person name="Brandt A."/>
            <person name="Peters S."/>
            <person name="van Staveren M."/>
            <person name="Dirkse W."/>
            <person name="Mooijman P."/>
            <person name="Klein Lankhorst R."/>
            <person name="Rose M."/>
            <person name="Hauf J."/>
            <person name="Koetter P."/>
            <person name="Berneiser S."/>
            <person name="Hempel S."/>
            <person name="Feldpausch M."/>
            <person name="Lamberth S."/>
            <person name="Van den Daele H."/>
            <person name="De Keyser A."/>
            <person name="Buysshaert C."/>
            <person name="Gielen J."/>
            <person name="Villarroel R."/>
            <person name="De Clercq R."/>
            <person name="van Montagu M."/>
            <person name="Rogers J."/>
            <person name="Cronin A."/>
            <person name="Quail M.A."/>
            <person name="Bray-Allen S."/>
            <person name="Clark L."/>
            <person name="Doggett J."/>
            <person name="Hall S."/>
            <person name="Kay M."/>
            <person name="Lennard N."/>
            <person name="McLay K."/>
            <person name="Mayes R."/>
            <person name="Pettett A."/>
            <person name="Rajandream M.A."/>
            <person name="Lyne M."/>
            <person name="Benes V."/>
            <person name="Rechmann S."/>
            <person name="Borkova D."/>
            <person name="Bloecker H."/>
            <person name="Scharfe M."/>
            <person name="Grimm M."/>
            <person name="Loehnert T.-H."/>
            <person name="Dose S."/>
            <person name="de Haan M."/>
            <person name="Maarse A.C."/>
            <person name="Schaefer M."/>
            <person name="Mueller-Auer S."/>
            <person name="Gabel C."/>
            <person name="Fuchs M."/>
            <person name="Fartmann B."/>
            <person name="Granderath K."/>
            <person name="Dauner D."/>
            <person name="Herzl A."/>
            <person name="Neumann S."/>
            <person name="Argiriou A."/>
            <person name="Vitale D."/>
            <person name="Liguori R."/>
            <person name="Piravandi E."/>
            <person name="Massenet O."/>
            <person name="Quigley F."/>
            <person name="Clabauld G."/>
            <person name="Muendlein A."/>
            <person name="Felber R."/>
            <person name="Schnabl S."/>
            <person name="Hiller R."/>
            <person name="Schmidt W."/>
            <person name="Lecharny A."/>
            <person name="Aubourg S."/>
            <person name="Chefdor F."/>
            <person name="Cooke R."/>
            <person name="Berger C."/>
            <person name="Monfort A."/>
            <person name="Casacuberta E."/>
            <person name="Gibbons T."/>
            <person name="Weber N."/>
            <person name="Vandenbol M."/>
            <person name="Bargues M."/>
            <person name="Terol J."/>
            <person name="Torres A."/>
            <person name="Perez-Perez A."/>
            <person name="Purnelle B."/>
            <person name="Bent E."/>
            <person name="Johnson S."/>
            <person name="Tacon D."/>
            <person name="Jesse T."/>
            <person name="Heijnen L."/>
            <person name="Schwarz S."/>
            <person name="Scholler P."/>
            <person name="Heber S."/>
            <person name="Francs P."/>
            <person name="Bielke C."/>
            <person name="Frishman D."/>
            <person name="Haase D."/>
            <person name="Lemcke K."/>
            <person name="Mewes H.-W."/>
            <person name="Stocker S."/>
            <person name="Zaccaria P."/>
            <person name="Bevan M."/>
            <person name="Wilson R.K."/>
            <person name="de la Bastide M."/>
            <person name="Habermann K."/>
            <person name="Parnell L."/>
            <person name="Dedhia N."/>
            <person name="Gnoj L."/>
            <person name="Schutz K."/>
            <person name="Huang E."/>
            <person name="Spiegel L."/>
            <person name="Sekhon M."/>
            <person name="Murray J."/>
            <person name="Sheet P."/>
            <person name="Cordes M."/>
            <person name="Abu-Threideh J."/>
            <person name="Stoneking T."/>
            <person name="Kalicki J."/>
            <person name="Graves T."/>
            <person name="Harmon G."/>
            <person name="Edwards J."/>
            <person name="Latreille P."/>
            <person name="Courtney L."/>
            <person name="Cloud J."/>
            <person name="Abbott A."/>
            <person name="Scott K."/>
            <person name="Johnson D."/>
            <person name="Minx P."/>
            <person name="Bentley D."/>
            <person name="Fulton B."/>
            <person name="Miller N."/>
            <person name="Greco T."/>
            <person name="Kemp K."/>
            <person name="Kramer J."/>
            <person name="Fulton L."/>
            <person name="Mardis E."/>
            <person name="Dante M."/>
            <person name="Pepin K."/>
            <person name="Hillier L.W."/>
            <person name="Nelson J."/>
            <person name="Spieth J."/>
            <person name="Ryan E."/>
            <person name="Andrews S."/>
            <person name="Geisel C."/>
            <person name="Layman D."/>
            <person name="Du H."/>
            <person name="Ali J."/>
            <person name="Berghoff A."/>
            <person name="Jones K."/>
            <person name="Drone K."/>
            <person name="Cotton M."/>
            <person name="Joshu C."/>
            <person name="Antonoiu B."/>
            <person name="Zidanic M."/>
            <person name="Strong C."/>
            <person name="Sun H."/>
            <person name="Lamar B."/>
            <person name="Yordan C."/>
            <person name="Ma P."/>
            <person name="Zhong J."/>
            <person name="Preston R."/>
            <person name="Vil D."/>
            <person name="Shekher M."/>
            <person name="Matero A."/>
            <person name="Shah R."/>
            <person name="Swaby I.K."/>
            <person name="O'Shaughnessy A."/>
            <person name="Rodriguez M."/>
            <person name="Hoffman J."/>
            <person name="Till S."/>
            <person name="Granat S."/>
            <person name="Shohdy N."/>
            <person name="Hasegawa A."/>
            <person name="Hameed A."/>
            <person name="Lodhi M."/>
            <person name="Johnson A."/>
            <person name="Chen E."/>
            <person name="Marra M.A."/>
            <person name="Martienssen R."/>
            <person name="McCombie W.R."/>
        </authorList>
    </citation>
    <scope>NUCLEOTIDE SEQUENCE [LARGE SCALE GENOMIC DNA]</scope>
    <source>
        <strain>cv. Columbia</strain>
    </source>
</reference>
<reference key="2">
    <citation type="journal article" date="2017" name="Plant J.">
        <title>Araport11: a complete reannotation of the Arabidopsis thaliana reference genome.</title>
        <authorList>
            <person name="Cheng C.Y."/>
            <person name="Krishnakumar V."/>
            <person name="Chan A.P."/>
            <person name="Thibaud-Nissen F."/>
            <person name="Schobel S."/>
            <person name="Town C.D."/>
        </authorList>
    </citation>
    <scope>GENOME REANNOTATION</scope>
    <source>
        <strain>cv. Columbia</strain>
    </source>
</reference>
<reference key="3">
    <citation type="journal article" date="2010" name="Plant Physiol.">
        <title>SEUSS and SEUSS-LIKE transcriptional adaptors regulate floral and embryonic development in Arabidopsis.</title>
        <authorList>
            <person name="Bao F."/>
            <person name="Azhakanandam S."/>
            <person name="Franks R.G."/>
        </authorList>
    </citation>
    <scope>FUNCTION</scope>
    <scope>DISRUPTION PHENOTYPE</scope>
</reference>
<sequence length="685" mass="77011">MQRSSGINNLHIPTSPMSFSSNGINLPGSMVLDGSPSMQHLPQQQQRQLLEQQAGQGSVPMRENSYSHVDKKLRLEVKQEDLLQQQILQQLIQRQDPTGRNPQMQALLQQQRVRQHQQMLQSMSPSQRLQLQKQQQLRQQLQQQGTQQISPNVRPYEVGVCARKLMMYLYHLQQRPAENCITYWRKFVAEYFSPRAKQRLCLSQYESVGHHALGMFPQAAPDMWQCDLCGTKSGKGFEATFDVLARLIEIKFASGIIDELLYLDHPRENRFPNGLMMLEYRKAVQETVHEQFRVVREGHLRIIFSPDLKILSWEFCARRHEELLLRRLIAPQVNQLLQVAQKCQSTISESGSQGVSQQDIQSNSNMVLGAGRQLAKFMELQSLNDLGYPKRYIRTLQISEVVKSMKDLMNFTGEHKVGPLEGLKQLLEQTATVKLQRQKMQEMEQFGNSGAMSGPAQAQMTLSSGTMSGSTANNNSNNHHQIVGRGAMNGSPQATAALTNYQSMLIRQNAMNNQNSNTGNQEGFSSQNPTLNSNQSPSSSSQQRENLATSGFPSSPQMQQQQHILNGTPNMLPQNHPHQLQSPHSHGNTQEQQMLHQLLQEMTENGASVEQQQAFPGQSGSNNNTERNTTASTSNISGGGRVPSRINSFKASSNNNLPFSEDISVTDHDFSEDGFFNNSDIYGGL</sequence>
<proteinExistence type="inferred from homology"/>
<protein>
    <recommendedName>
        <fullName>Probable transcriptional regulator SLK3</fullName>
        <shortName>AtSLK3</shortName>
    </recommendedName>
    <alternativeName>
        <fullName>Protein SEUSS-like 3</fullName>
    </alternativeName>
</protein>